<comment type="function">
    <text evidence="1">One of the primary rRNA binding proteins, it binds directly to 16S rRNA where it helps nucleate assembly of the platform of the 30S subunit by binding and bridging several RNA helices of the 16S rRNA.</text>
</comment>
<comment type="function">
    <text evidence="1">Forms an intersubunit bridge (bridge B4) with the 23S rRNA of the 50S subunit in the ribosome.</text>
</comment>
<comment type="subunit">
    <text evidence="1">Part of the 30S ribosomal subunit. Forms a bridge to the 50S subunit in the 70S ribosome, contacting the 23S rRNA.</text>
</comment>
<comment type="similarity">
    <text evidence="1">Belongs to the universal ribosomal protein uS15 family.</text>
</comment>
<comment type="sequence caution" evidence="2">
    <conflict type="erroneous initiation">
        <sequence resource="EMBL-CDS" id="ABV84830"/>
    </conflict>
</comment>
<feature type="chain" id="PRO_0000354213" description="Small ribosomal subunit protein uS15">
    <location>
        <begin position="1"/>
        <end position="91"/>
    </location>
</feature>
<sequence>MSITTERKQQLIKEYAITENDTGSSAVQCAILTERINNLTEHFKSNHKDHTSRRGLLILVGRRRRLLNYIKKNNVSKYLDLISKLGIRKIK</sequence>
<keyword id="KW-0687">Ribonucleoprotein</keyword>
<keyword id="KW-0689">Ribosomal protein</keyword>
<keyword id="KW-0694">RNA-binding</keyword>
<keyword id="KW-0699">rRNA-binding</keyword>
<gene>
    <name evidence="1" type="primary">rpsO</name>
    <name type="ordered locus">RMA_0670</name>
</gene>
<dbReference type="EMBL" id="CP000683">
    <property type="protein sequence ID" value="ABV84830.1"/>
    <property type="status" value="ALT_INIT"/>
    <property type="molecule type" value="Genomic_DNA"/>
</dbReference>
<dbReference type="RefSeq" id="WP_004995678.1">
    <property type="nucleotide sequence ID" value="NC_009900.1"/>
</dbReference>
<dbReference type="SMR" id="A8F1P4"/>
<dbReference type="GeneID" id="95362261"/>
<dbReference type="KEGG" id="rms:RMA_0670"/>
<dbReference type="HOGENOM" id="CLU_148518_0_0_5"/>
<dbReference type="Proteomes" id="UP000001311">
    <property type="component" value="Chromosome"/>
</dbReference>
<dbReference type="GO" id="GO:0022627">
    <property type="term" value="C:cytosolic small ribosomal subunit"/>
    <property type="evidence" value="ECO:0007669"/>
    <property type="project" value="TreeGrafter"/>
</dbReference>
<dbReference type="GO" id="GO:0019843">
    <property type="term" value="F:rRNA binding"/>
    <property type="evidence" value="ECO:0007669"/>
    <property type="project" value="UniProtKB-UniRule"/>
</dbReference>
<dbReference type="GO" id="GO:0003735">
    <property type="term" value="F:structural constituent of ribosome"/>
    <property type="evidence" value="ECO:0007669"/>
    <property type="project" value="InterPro"/>
</dbReference>
<dbReference type="GO" id="GO:0006412">
    <property type="term" value="P:translation"/>
    <property type="evidence" value="ECO:0007669"/>
    <property type="project" value="UniProtKB-UniRule"/>
</dbReference>
<dbReference type="CDD" id="cd00353">
    <property type="entry name" value="Ribosomal_S15p_S13e"/>
    <property type="match status" value="1"/>
</dbReference>
<dbReference type="FunFam" id="1.10.287.10:FF:000002">
    <property type="entry name" value="30S ribosomal protein S15"/>
    <property type="match status" value="1"/>
</dbReference>
<dbReference type="Gene3D" id="6.10.250.3130">
    <property type="match status" value="1"/>
</dbReference>
<dbReference type="Gene3D" id="1.10.287.10">
    <property type="entry name" value="S15/NS1, RNA-binding"/>
    <property type="match status" value="1"/>
</dbReference>
<dbReference type="HAMAP" id="MF_01343_B">
    <property type="entry name" value="Ribosomal_uS15_B"/>
    <property type="match status" value="1"/>
</dbReference>
<dbReference type="InterPro" id="IPR000589">
    <property type="entry name" value="Ribosomal_uS15"/>
</dbReference>
<dbReference type="InterPro" id="IPR005290">
    <property type="entry name" value="Ribosomal_uS15_bac-type"/>
</dbReference>
<dbReference type="InterPro" id="IPR009068">
    <property type="entry name" value="uS15_NS1_RNA-bd_sf"/>
</dbReference>
<dbReference type="NCBIfam" id="TIGR00952">
    <property type="entry name" value="S15_bact"/>
    <property type="match status" value="1"/>
</dbReference>
<dbReference type="PANTHER" id="PTHR23321">
    <property type="entry name" value="RIBOSOMAL PROTEIN S15, BACTERIAL AND ORGANELLAR"/>
    <property type="match status" value="1"/>
</dbReference>
<dbReference type="PANTHER" id="PTHR23321:SF26">
    <property type="entry name" value="SMALL RIBOSOMAL SUBUNIT PROTEIN US15M"/>
    <property type="match status" value="1"/>
</dbReference>
<dbReference type="Pfam" id="PF00312">
    <property type="entry name" value="Ribosomal_S15"/>
    <property type="match status" value="1"/>
</dbReference>
<dbReference type="SMART" id="SM01387">
    <property type="entry name" value="Ribosomal_S15"/>
    <property type="match status" value="1"/>
</dbReference>
<dbReference type="SUPFAM" id="SSF47060">
    <property type="entry name" value="S15/NS1 RNA-binding domain"/>
    <property type="match status" value="1"/>
</dbReference>
<dbReference type="PROSITE" id="PS00362">
    <property type="entry name" value="RIBOSOMAL_S15"/>
    <property type="match status" value="1"/>
</dbReference>
<proteinExistence type="inferred from homology"/>
<accession>A8F1P4</accession>
<organism>
    <name type="scientific">Rickettsia massiliae (strain Mtu5)</name>
    <dbReference type="NCBI Taxonomy" id="416276"/>
    <lineage>
        <taxon>Bacteria</taxon>
        <taxon>Pseudomonadati</taxon>
        <taxon>Pseudomonadota</taxon>
        <taxon>Alphaproteobacteria</taxon>
        <taxon>Rickettsiales</taxon>
        <taxon>Rickettsiaceae</taxon>
        <taxon>Rickettsieae</taxon>
        <taxon>Rickettsia</taxon>
        <taxon>spotted fever group</taxon>
    </lineage>
</organism>
<protein>
    <recommendedName>
        <fullName evidence="1">Small ribosomal subunit protein uS15</fullName>
    </recommendedName>
    <alternativeName>
        <fullName evidence="2">30S ribosomal protein S15</fullName>
    </alternativeName>
</protein>
<evidence type="ECO:0000255" key="1">
    <source>
        <dbReference type="HAMAP-Rule" id="MF_01343"/>
    </source>
</evidence>
<evidence type="ECO:0000305" key="2"/>
<name>RS15_RICM5</name>
<reference key="1">
    <citation type="journal article" date="2007" name="Genome Res.">
        <title>Lateral gene transfer between obligate intracellular bacteria: evidence from the Rickettsia massiliae genome.</title>
        <authorList>
            <person name="Blanc G."/>
            <person name="Ogata H."/>
            <person name="Robert C."/>
            <person name="Audic S."/>
            <person name="Claverie J.-M."/>
            <person name="Raoult D."/>
        </authorList>
    </citation>
    <scope>NUCLEOTIDE SEQUENCE [LARGE SCALE GENOMIC DNA]</scope>
    <source>
        <strain>Mtu5</strain>
    </source>
</reference>